<sequence length="288" mass="32106">MASLKEIDTRIKSTKKMKQITKAMNMVSSSKLRRAEKNTKQFTPYMDKMQDAITAVAGASSNTNHPMLRPRKITRSGYLVITSDKGLAGAYSANVLKKLITDIEAKHQDSSEYSIVVLGQQGVDFLKNRGYDIEYSQVDVPDQPSFKSVQALANHAIDLYSEEEIDELNIYYSHYVSVLENKPTSRQVLPLSQEDSSKGHGHLSSYEFEPDKESILSVILPQYVESLIYGTILDAKASEHATRMTAMKNATDNATELIDDLSLEYNRARQAEITQQITEIVGGSAALE</sequence>
<comment type="function">
    <text evidence="1">Produces ATP from ADP in the presence of a proton gradient across the membrane. The gamma chain is believed to be important in regulating ATPase activity and the flow of protons through the CF(0) complex.</text>
</comment>
<comment type="subunit">
    <text evidence="1">F-type ATPases have 2 components, CF(1) - the catalytic core - and CF(0) - the membrane proton channel. CF(1) has five subunits: alpha(3), beta(3), gamma(1), delta(1), epsilon(1). CF(0) has three main subunits: a, b and c.</text>
</comment>
<comment type="subcellular location">
    <subcellularLocation>
        <location evidence="1">Cell membrane</location>
        <topology evidence="1">Peripheral membrane protein</topology>
    </subcellularLocation>
</comment>
<comment type="similarity">
    <text evidence="1">Belongs to the ATPase gamma chain family.</text>
</comment>
<accession>Q6GEX1</accession>
<protein>
    <recommendedName>
        <fullName evidence="1">ATP synthase gamma chain</fullName>
    </recommendedName>
    <alternativeName>
        <fullName evidence="1">ATP synthase F1 sector gamma subunit</fullName>
    </alternativeName>
    <alternativeName>
        <fullName evidence="1">F-ATPase gamma subunit</fullName>
    </alternativeName>
</protein>
<evidence type="ECO:0000255" key="1">
    <source>
        <dbReference type="HAMAP-Rule" id="MF_00815"/>
    </source>
</evidence>
<feature type="chain" id="PRO_0000073374" description="ATP synthase gamma chain">
    <location>
        <begin position="1"/>
        <end position="288"/>
    </location>
</feature>
<keyword id="KW-0066">ATP synthesis</keyword>
<keyword id="KW-1003">Cell membrane</keyword>
<keyword id="KW-0139">CF(1)</keyword>
<keyword id="KW-0375">Hydrogen ion transport</keyword>
<keyword id="KW-0406">Ion transport</keyword>
<keyword id="KW-0472">Membrane</keyword>
<keyword id="KW-0813">Transport</keyword>
<proteinExistence type="inferred from homology"/>
<reference key="1">
    <citation type="journal article" date="2004" name="Proc. Natl. Acad. Sci. U.S.A.">
        <title>Complete genomes of two clinical Staphylococcus aureus strains: evidence for the rapid evolution of virulence and drug resistance.</title>
        <authorList>
            <person name="Holden M.T.G."/>
            <person name="Feil E.J."/>
            <person name="Lindsay J.A."/>
            <person name="Peacock S.J."/>
            <person name="Day N.P.J."/>
            <person name="Enright M.C."/>
            <person name="Foster T.J."/>
            <person name="Moore C.E."/>
            <person name="Hurst L."/>
            <person name="Atkin R."/>
            <person name="Barron A."/>
            <person name="Bason N."/>
            <person name="Bentley S.D."/>
            <person name="Chillingworth C."/>
            <person name="Chillingworth T."/>
            <person name="Churcher C."/>
            <person name="Clark L."/>
            <person name="Corton C."/>
            <person name="Cronin A."/>
            <person name="Doggett J."/>
            <person name="Dowd L."/>
            <person name="Feltwell T."/>
            <person name="Hance Z."/>
            <person name="Harris B."/>
            <person name="Hauser H."/>
            <person name="Holroyd S."/>
            <person name="Jagels K."/>
            <person name="James K.D."/>
            <person name="Lennard N."/>
            <person name="Line A."/>
            <person name="Mayes R."/>
            <person name="Moule S."/>
            <person name="Mungall K."/>
            <person name="Ormond D."/>
            <person name="Quail M.A."/>
            <person name="Rabbinowitsch E."/>
            <person name="Rutherford K.M."/>
            <person name="Sanders M."/>
            <person name="Sharp S."/>
            <person name="Simmonds M."/>
            <person name="Stevens K."/>
            <person name="Whitehead S."/>
            <person name="Barrell B.G."/>
            <person name="Spratt B.G."/>
            <person name="Parkhill J."/>
        </authorList>
    </citation>
    <scope>NUCLEOTIDE SEQUENCE [LARGE SCALE GENOMIC DNA]</scope>
    <source>
        <strain>MRSA252</strain>
    </source>
</reference>
<name>ATPG_STAAR</name>
<organism>
    <name type="scientific">Staphylococcus aureus (strain MRSA252)</name>
    <dbReference type="NCBI Taxonomy" id="282458"/>
    <lineage>
        <taxon>Bacteria</taxon>
        <taxon>Bacillati</taxon>
        <taxon>Bacillota</taxon>
        <taxon>Bacilli</taxon>
        <taxon>Bacillales</taxon>
        <taxon>Staphylococcaceae</taxon>
        <taxon>Staphylococcus</taxon>
    </lineage>
</organism>
<gene>
    <name evidence="1" type="primary">atpG</name>
    <name type="ordered locus">SAR2192</name>
</gene>
<dbReference type="EMBL" id="BX571856">
    <property type="protein sequence ID" value="CAG41173.1"/>
    <property type="molecule type" value="Genomic_DNA"/>
</dbReference>
<dbReference type="RefSeq" id="WP_000157603.1">
    <property type="nucleotide sequence ID" value="NC_002952.2"/>
</dbReference>
<dbReference type="SMR" id="Q6GEX1"/>
<dbReference type="GeneID" id="98346411"/>
<dbReference type="KEGG" id="sar:SAR2192"/>
<dbReference type="HOGENOM" id="CLU_050669_0_1_9"/>
<dbReference type="Proteomes" id="UP000000596">
    <property type="component" value="Chromosome"/>
</dbReference>
<dbReference type="GO" id="GO:0005886">
    <property type="term" value="C:plasma membrane"/>
    <property type="evidence" value="ECO:0007669"/>
    <property type="project" value="UniProtKB-SubCell"/>
</dbReference>
<dbReference type="GO" id="GO:0045259">
    <property type="term" value="C:proton-transporting ATP synthase complex"/>
    <property type="evidence" value="ECO:0007669"/>
    <property type="project" value="UniProtKB-KW"/>
</dbReference>
<dbReference type="GO" id="GO:0005524">
    <property type="term" value="F:ATP binding"/>
    <property type="evidence" value="ECO:0007669"/>
    <property type="project" value="UniProtKB-UniRule"/>
</dbReference>
<dbReference type="GO" id="GO:0046933">
    <property type="term" value="F:proton-transporting ATP synthase activity, rotational mechanism"/>
    <property type="evidence" value="ECO:0007669"/>
    <property type="project" value="UniProtKB-UniRule"/>
</dbReference>
<dbReference type="GO" id="GO:0042777">
    <property type="term" value="P:proton motive force-driven plasma membrane ATP synthesis"/>
    <property type="evidence" value="ECO:0007669"/>
    <property type="project" value="UniProtKB-UniRule"/>
</dbReference>
<dbReference type="CDD" id="cd12151">
    <property type="entry name" value="F1-ATPase_gamma"/>
    <property type="match status" value="1"/>
</dbReference>
<dbReference type="FunFam" id="1.10.287.80:FF:000019">
    <property type="entry name" value="ATP synthase gamma chain"/>
    <property type="match status" value="1"/>
</dbReference>
<dbReference type="FunFam" id="3.40.1380.10:FF:000002">
    <property type="entry name" value="ATP synthase gamma chain"/>
    <property type="match status" value="1"/>
</dbReference>
<dbReference type="Gene3D" id="3.40.1380.10">
    <property type="match status" value="1"/>
</dbReference>
<dbReference type="Gene3D" id="1.10.287.80">
    <property type="entry name" value="ATP synthase, gamma subunit, helix hairpin domain"/>
    <property type="match status" value="1"/>
</dbReference>
<dbReference type="HAMAP" id="MF_00815">
    <property type="entry name" value="ATP_synth_gamma_bact"/>
    <property type="match status" value="1"/>
</dbReference>
<dbReference type="InterPro" id="IPR035968">
    <property type="entry name" value="ATP_synth_F1_ATPase_gsu"/>
</dbReference>
<dbReference type="InterPro" id="IPR000131">
    <property type="entry name" value="ATP_synth_F1_gsu"/>
</dbReference>
<dbReference type="NCBIfam" id="TIGR01146">
    <property type="entry name" value="ATPsyn_F1gamma"/>
    <property type="match status" value="1"/>
</dbReference>
<dbReference type="PANTHER" id="PTHR11693">
    <property type="entry name" value="ATP SYNTHASE GAMMA CHAIN"/>
    <property type="match status" value="1"/>
</dbReference>
<dbReference type="PANTHER" id="PTHR11693:SF22">
    <property type="entry name" value="ATP SYNTHASE SUBUNIT GAMMA, MITOCHONDRIAL"/>
    <property type="match status" value="1"/>
</dbReference>
<dbReference type="Pfam" id="PF00231">
    <property type="entry name" value="ATP-synt"/>
    <property type="match status" value="1"/>
</dbReference>
<dbReference type="PRINTS" id="PR00126">
    <property type="entry name" value="ATPASEGAMMA"/>
</dbReference>
<dbReference type="SUPFAM" id="SSF52943">
    <property type="entry name" value="ATP synthase (F1-ATPase), gamma subunit"/>
    <property type="match status" value="1"/>
</dbReference>